<organism>
    <name type="scientific">Clavibacter michiganensis subsp. michiganensis (strain NCPPB 382)</name>
    <dbReference type="NCBI Taxonomy" id="443906"/>
    <lineage>
        <taxon>Bacteria</taxon>
        <taxon>Bacillati</taxon>
        <taxon>Actinomycetota</taxon>
        <taxon>Actinomycetes</taxon>
        <taxon>Micrococcales</taxon>
        <taxon>Microbacteriaceae</taxon>
        <taxon>Clavibacter</taxon>
    </lineage>
</organism>
<evidence type="ECO:0000255" key="1">
    <source>
        <dbReference type="HAMAP-Rule" id="MF_00268"/>
    </source>
</evidence>
<evidence type="ECO:0000256" key="2">
    <source>
        <dbReference type="SAM" id="MobiDB-lite"/>
    </source>
</evidence>
<keyword id="KW-0067">ATP-binding</keyword>
<keyword id="KW-0963">Cytoplasm</keyword>
<keyword id="KW-0227">DNA damage</keyword>
<keyword id="KW-0233">DNA recombination</keyword>
<keyword id="KW-0234">DNA repair</keyword>
<keyword id="KW-0238">DNA-binding</keyword>
<keyword id="KW-0547">Nucleotide-binding</keyword>
<keyword id="KW-0742">SOS response</keyword>
<proteinExistence type="inferred from homology"/>
<reference key="1">
    <citation type="journal article" date="2008" name="J. Bacteriol.">
        <title>The genome sequence of the tomato-pathogenic actinomycete Clavibacter michiganensis subsp. michiganensis NCPPB382 reveals a large island involved in pathogenicity.</title>
        <authorList>
            <person name="Gartemann K.-H."/>
            <person name="Abt B."/>
            <person name="Bekel T."/>
            <person name="Burger A."/>
            <person name="Engemann J."/>
            <person name="Fluegel M."/>
            <person name="Gaigalat L."/>
            <person name="Goesmann A."/>
            <person name="Graefen I."/>
            <person name="Kalinowski J."/>
            <person name="Kaup O."/>
            <person name="Kirchner O."/>
            <person name="Krause L."/>
            <person name="Linke B."/>
            <person name="McHardy A."/>
            <person name="Meyer F."/>
            <person name="Pohle S."/>
            <person name="Rueckert C."/>
            <person name="Schneiker S."/>
            <person name="Zellermann E.-M."/>
            <person name="Puehler A."/>
            <person name="Eichenlaub R."/>
            <person name="Kaiser O."/>
            <person name="Bartels D."/>
        </authorList>
    </citation>
    <scope>NUCLEOTIDE SEQUENCE [LARGE SCALE GENOMIC DNA]</scope>
    <source>
        <strain>NCPPB 382</strain>
    </source>
</reference>
<protein>
    <recommendedName>
        <fullName evidence="1">Protein RecA</fullName>
    </recommendedName>
    <alternativeName>
        <fullName evidence="1">Recombinase A</fullName>
    </alternativeName>
</protein>
<gene>
    <name evidence="1" type="primary">recA</name>
    <name type="ordered locus">CMM_2025</name>
</gene>
<sequence length="362" mass="38446">MASSADREKSLETALAQIDRQFGKGSVMRLGSDERAPVAVIPTGSVALDVALGIGGLPRGRIVEIYGPESSGKTTLTLHAIANAQRAGGIAAFIDAEHALDPEYAKKLGVDIDALLVSQPDTGEQALEIADMLVRSGSIDLVVIDSVAALVPRAEIEGEMGDSHVGLQARLMSQALRKLTGGLNQTQTTMIFINQLREKIGVFFGSPETTAGGKALKFYASVRLDIRRIETLKDGTDAVGNRTRVKVVKNKMAPPFKQAEFDILYGTGISREGSLIDFGVEHEIVRKSGAWYTYDGDQLGQGKENSRKHLLNNPEIAAEIEQKIKVKLGLVKDPNAVADAPADSAPAPVAAVAPKASARKSA</sequence>
<accession>A5CSL7</accession>
<comment type="function">
    <text evidence="1">Can catalyze the hydrolysis of ATP in the presence of single-stranded DNA, the ATP-dependent uptake of single-stranded DNA by duplex DNA, and the ATP-dependent hybridization of homologous single-stranded DNAs. It interacts with LexA causing its activation and leading to its autocatalytic cleavage.</text>
</comment>
<comment type="subcellular location">
    <subcellularLocation>
        <location evidence="1">Cytoplasm</location>
    </subcellularLocation>
</comment>
<comment type="similarity">
    <text evidence="1">Belongs to the RecA family.</text>
</comment>
<name>RECA_CLAM3</name>
<dbReference type="EMBL" id="AM711867">
    <property type="protein sequence ID" value="CAN02088.1"/>
    <property type="molecule type" value="Genomic_DNA"/>
</dbReference>
<dbReference type="RefSeq" id="WP_012038712.1">
    <property type="nucleotide sequence ID" value="NC_009480.1"/>
</dbReference>
<dbReference type="SMR" id="A5CSL7"/>
<dbReference type="GeneID" id="92948018"/>
<dbReference type="KEGG" id="cmi:CMM_2025"/>
<dbReference type="eggNOG" id="COG0468">
    <property type="taxonomic scope" value="Bacteria"/>
</dbReference>
<dbReference type="HOGENOM" id="CLU_040469_3_2_11"/>
<dbReference type="OrthoDB" id="9776733at2"/>
<dbReference type="Proteomes" id="UP000001564">
    <property type="component" value="Chromosome"/>
</dbReference>
<dbReference type="GO" id="GO:0005829">
    <property type="term" value="C:cytosol"/>
    <property type="evidence" value="ECO:0007669"/>
    <property type="project" value="TreeGrafter"/>
</dbReference>
<dbReference type="GO" id="GO:0005524">
    <property type="term" value="F:ATP binding"/>
    <property type="evidence" value="ECO:0007669"/>
    <property type="project" value="UniProtKB-UniRule"/>
</dbReference>
<dbReference type="GO" id="GO:0016887">
    <property type="term" value="F:ATP hydrolysis activity"/>
    <property type="evidence" value="ECO:0007669"/>
    <property type="project" value="InterPro"/>
</dbReference>
<dbReference type="GO" id="GO:0140664">
    <property type="term" value="F:ATP-dependent DNA damage sensor activity"/>
    <property type="evidence" value="ECO:0007669"/>
    <property type="project" value="InterPro"/>
</dbReference>
<dbReference type="GO" id="GO:0003684">
    <property type="term" value="F:damaged DNA binding"/>
    <property type="evidence" value="ECO:0007669"/>
    <property type="project" value="UniProtKB-UniRule"/>
</dbReference>
<dbReference type="GO" id="GO:0003697">
    <property type="term" value="F:single-stranded DNA binding"/>
    <property type="evidence" value="ECO:0007669"/>
    <property type="project" value="UniProtKB-UniRule"/>
</dbReference>
<dbReference type="GO" id="GO:0006310">
    <property type="term" value="P:DNA recombination"/>
    <property type="evidence" value="ECO:0007669"/>
    <property type="project" value="UniProtKB-UniRule"/>
</dbReference>
<dbReference type="GO" id="GO:0006281">
    <property type="term" value="P:DNA repair"/>
    <property type="evidence" value="ECO:0007669"/>
    <property type="project" value="UniProtKB-UniRule"/>
</dbReference>
<dbReference type="GO" id="GO:0009432">
    <property type="term" value="P:SOS response"/>
    <property type="evidence" value="ECO:0007669"/>
    <property type="project" value="UniProtKB-UniRule"/>
</dbReference>
<dbReference type="CDD" id="cd00983">
    <property type="entry name" value="RecA"/>
    <property type="match status" value="1"/>
</dbReference>
<dbReference type="FunFam" id="3.40.50.300:FF:000087">
    <property type="entry name" value="Recombinase RecA"/>
    <property type="match status" value="1"/>
</dbReference>
<dbReference type="Gene3D" id="3.40.50.300">
    <property type="entry name" value="P-loop containing nucleotide triphosphate hydrolases"/>
    <property type="match status" value="1"/>
</dbReference>
<dbReference type="HAMAP" id="MF_00268">
    <property type="entry name" value="RecA"/>
    <property type="match status" value="1"/>
</dbReference>
<dbReference type="InterPro" id="IPR003593">
    <property type="entry name" value="AAA+_ATPase"/>
</dbReference>
<dbReference type="InterPro" id="IPR013765">
    <property type="entry name" value="DNA_recomb/repair_RecA"/>
</dbReference>
<dbReference type="InterPro" id="IPR020584">
    <property type="entry name" value="DNA_recomb/repair_RecA_CS"/>
</dbReference>
<dbReference type="InterPro" id="IPR027417">
    <property type="entry name" value="P-loop_NTPase"/>
</dbReference>
<dbReference type="InterPro" id="IPR049261">
    <property type="entry name" value="RecA-like_C"/>
</dbReference>
<dbReference type="InterPro" id="IPR049428">
    <property type="entry name" value="RecA-like_N"/>
</dbReference>
<dbReference type="InterPro" id="IPR020588">
    <property type="entry name" value="RecA_ATP-bd"/>
</dbReference>
<dbReference type="InterPro" id="IPR023400">
    <property type="entry name" value="RecA_C_sf"/>
</dbReference>
<dbReference type="InterPro" id="IPR020587">
    <property type="entry name" value="RecA_monomer-monomer_interface"/>
</dbReference>
<dbReference type="NCBIfam" id="TIGR02012">
    <property type="entry name" value="tigrfam_recA"/>
    <property type="match status" value="1"/>
</dbReference>
<dbReference type="PANTHER" id="PTHR45900:SF1">
    <property type="entry name" value="MITOCHONDRIAL DNA REPAIR PROTEIN RECA HOMOLOG-RELATED"/>
    <property type="match status" value="1"/>
</dbReference>
<dbReference type="PANTHER" id="PTHR45900">
    <property type="entry name" value="RECA"/>
    <property type="match status" value="1"/>
</dbReference>
<dbReference type="Pfam" id="PF00154">
    <property type="entry name" value="RecA"/>
    <property type="match status" value="1"/>
</dbReference>
<dbReference type="Pfam" id="PF21096">
    <property type="entry name" value="RecA_C"/>
    <property type="match status" value="1"/>
</dbReference>
<dbReference type="PRINTS" id="PR00142">
    <property type="entry name" value="RECA"/>
</dbReference>
<dbReference type="SMART" id="SM00382">
    <property type="entry name" value="AAA"/>
    <property type="match status" value="1"/>
</dbReference>
<dbReference type="SUPFAM" id="SSF52540">
    <property type="entry name" value="P-loop containing nucleoside triphosphate hydrolases"/>
    <property type="match status" value="1"/>
</dbReference>
<dbReference type="SUPFAM" id="SSF54752">
    <property type="entry name" value="RecA protein, C-terminal domain"/>
    <property type="match status" value="1"/>
</dbReference>
<dbReference type="PROSITE" id="PS00321">
    <property type="entry name" value="RECA_1"/>
    <property type="match status" value="1"/>
</dbReference>
<dbReference type="PROSITE" id="PS50162">
    <property type="entry name" value="RECA_2"/>
    <property type="match status" value="1"/>
</dbReference>
<dbReference type="PROSITE" id="PS50163">
    <property type="entry name" value="RECA_3"/>
    <property type="match status" value="1"/>
</dbReference>
<feature type="chain" id="PRO_1000047901" description="Protein RecA">
    <location>
        <begin position="1"/>
        <end position="362"/>
    </location>
</feature>
<feature type="region of interest" description="Disordered" evidence="2">
    <location>
        <begin position="337"/>
        <end position="362"/>
    </location>
</feature>
<feature type="compositionally biased region" description="Low complexity" evidence="2">
    <location>
        <begin position="337"/>
        <end position="356"/>
    </location>
</feature>
<feature type="binding site" evidence="1">
    <location>
        <begin position="67"/>
        <end position="74"/>
    </location>
    <ligand>
        <name>ATP</name>
        <dbReference type="ChEBI" id="CHEBI:30616"/>
    </ligand>
</feature>